<comment type="similarity">
    <text evidence="2">Belongs to the eukaryotic ribosomal protein eL30 family.</text>
</comment>
<accession>Q9LSA3</accession>
<feature type="chain" id="PRO_0000146131" description="Large ribosomal subunit protein eL30x">
    <location>
        <begin position="1"/>
        <end position="112"/>
    </location>
</feature>
<protein>
    <recommendedName>
        <fullName evidence="1">Large ribosomal subunit protein eL30x</fullName>
    </recommendedName>
    <alternativeName>
        <fullName>60S ribosomal protein L30-3</fullName>
    </alternativeName>
</protein>
<gene>
    <name type="primary">RPL30C</name>
    <name type="ordered locus">At3g18740</name>
    <name type="ORF">MVE11.10</name>
</gene>
<proteinExistence type="inferred from homology"/>
<reference key="1">
    <citation type="journal article" date="2000" name="DNA Res.">
        <title>Structural analysis of Arabidopsis thaliana chromosome 3. I. Sequence features of the regions of 4,504,864 bp covered by sixty P1 and TAC clones.</title>
        <authorList>
            <person name="Sato S."/>
            <person name="Nakamura Y."/>
            <person name="Kaneko T."/>
            <person name="Katoh T."/>
            <person name="Asamizu E."/>
            <person name="Tabata S."/>
        </authorList>
    </citation>
    <scope>NUCLEOTIDE SEQUENCE [LARGE SCALE GENOMIC DNA]</scope>
    <source>
        <strain>cv. Columbia</strain>
    </source>
</reference>
<reference key="2">
    <citation type="journal article" date="2017" name="Plant J.">
        <title>Araport11: a complete reannotation of the Arabidopsis thaliana reference genome.</title>
        <authorList>
            <person name="Cheng C.Y."/>
            <person name="Krishnakumar V."/>
            <person name="Chan A.P."/>
            <person name="Thibaud-Nissen F."/>
            <person name="Schobel S."/>
            <person name="Town C.D."/>
        </authorList>
    </citation>
    <scope>GENOME REANNOTATION</scope>
    <source>
        <strain>cv. Columbia</strain>
    </source>
</reference>
<reference key="3">
    <citation type="journal article" date="2003" name="Science">
        <title>Empirical analysis of transcriptional activity in the Arabidopsis genome.</title>
        <authorList>
            <person name="Yamada K."/>
            <person name="Lim J."/>
            <person name="Dale J.M."/>
            <person name="Chen H."/>
            <person name="Shinn P."/>
            <person name="Palm C.J."/>
            <person name="Southwick A.M."/>
            <person name="Wu H.C."/>
            <person name="Kim C.J."/>
            <person name="Nguyen M."/>
            <person name="Pham P.K."/>
            <person name="Cheuk R.F."/>
            <person name="Karlin-Newmann G."/>
            <person name="Liu S.X."/>
            <person name="Lam B."/>
            <person name="Sakano H."/>
            <person name="Wu T."/>
            <person name="Yu G."/>
            <person name="Miranda M."/>
            <person name="Quach H.L."/>
            <person name="Tripp M."/>
            <person name="Chang C.H."/>
            <person name="Lee J.M."/>
            <person name="Toriumi M.J."/>
            <person name="Chan M.M."/>
            <person name="Tang C.C."/>
            <person name="Onodera C.S."/>
            <person name="Deng J.M."/>
            <person name="Akiyama K."/>
            <person name="Ansari Y."/>
            <person name="Arakawa T."/>
            <person name="Banh J."/>
            <person name="Banno F."/>
            <person name="Bowser L."/>
            <person name="Brooks S.Y."/>
            <person name="Carninci P."/>
            <person name="Chao Q."/>
            <person name="Choy N."/>
            <person name="Enju A."/>
            <person name="Goldsmith A.D."/>
            <person name="Gurjal M."/>
            <person name="Hansen N.F."/>
            <person name="Hayashizaki Y."/>
            <person name="Johnson-Hopson C."/>
            <person name="Hsuan V.W."/>
            <person name="Iida K."/>
            <person name="Karnes M."/>
            <person name="Khan S."/>
            <person name="Koesema E."/>
            <person name="Ishida J."/>
            <person name="Jiang P.X."/>
            <person name="Jones T."/>
            <person name="Kawai J."/>
            <person name="Kamiya A."/>
            <person name="Meyers C."/>
            <person name="Nakajima M."/>
            <person name="Narusaka M."/>
            <person name="Seki M."/>
            <person name="Sakurai T."/>
            <person name="Satou M."/>
            <person name="Tamse R."/>
            <person name="Vaysberg M."/>
            <person name="Wallender E.K."/>
            <person name="Wong C."/>
            <person name="Yamamura Y."/>
            <person name="Yuan S."/>
            <person name="Shinozaki K."/>
            <person name="Davis R.W."/>
            <person name="Theologis A."/>
            <person name="Ecker J.R."/>
        </authorList>
    </citation>
    <scope>NUCLEOTIDE SEQUENCE [LARGE SCALE MRNA]</scope>
    <source>
        <strain>cv. Columbia</strain>
    </source>
</reference>
<reference key="4">
    <citation type="submission" date="2002-03" db="EMBL/GenBank/DDBJ databases">
        <title>Full-length cDNA from Arabidopsis thaliana.</title>
        <authorList>
            <person name="Brover V.V."/>
            <person name="Troukhan M.E."/>
            <person name="Alexandrov N.A."/>
            <person name="Lu Y.-P."/>
            <person name="Flavell R.B."/>
            <person name="Feldmann K.A."/>
        </authorList>
    </citation>
    <scope>NUCLEOTIDE SEQUENCE [LARGE SCALE MRNA]</scope>
</reference>
<reference key="5">
    <citation type="journal article" date="2001" name="Plant Physiol.">
        <title>The organization of cytoplasmic ribosomal protein genes in the Arabidopsis genome.</title>
        <authorList>
            <person name="Barakat A."/>
            <person name="Szick-Miranda K."/>
            <person name="Chang I.-F."/>
            <person name="Guyot R."/>
            <person name="Blanc G."/>
            <person name="Cooke R."/>
            <person name="Delseny M."/>
            <person name="Bailey-Serres J."/>
        </authorList>
    </citation>
    <scope>GENE FAMILY ORGANIZATION</scope>
    <scope>NOMENCLATURE</scope>
</reference>
<reference key="6">
    <citation type="journal article" date="2023" name="Plant Cell">
        <title>An updated nomenclature for plant ribosomal protein genes.</title>
        <authorList>
            <person name="Scarpin M.R."/>
            <person name="Busche M."/>
            <person name="Martinez R.E."/>
            <person name="Harper L.C."/>
            <person name="Reiser L."/>
            <person name="Szakonyi D."/>
            <person name="Merchante C."/>
            <person name="Lan T."/>
            <person name="Xiong W."/>
            <person name="Mo B."/>
            <person name="Tang G."/>
            <person name="Chen X."/>
            <person name="Bailey-Serres J."/>
            <person name="Browning K.S."/>
            <person name="Brunkard J.O."/>
        </authorList>
    </citation>
    <scope>NOMENCLATURE</scope>
</reference>
<name>RL303_ARATH</name>
<sequence length="112" mass="12279">MVAEKKAKKSHEGINSRLALVMKSGKYTLGYKSVLKSLRSSKGKLILISSNCPPLRRSEIEYYAMLAKVGVHRYNGNNVDLGTACGKYFRVSCLSIVDPGDSDIIKTLPGDQ</sequence>
<keyword id="KW-1185">Reference proteome</keyword>
<keyword id="KW-0687">Ribonucleoprotein</keyword>
<keyword id="KW-0689">Ribosomal protein</keyword>
<organism>
    <name type="scientific">Arabidopsis thaliana</name>
    <name type="common">Mouse-ear cress</name>
    <dbReference type="NCBI Taxonomy" id="3702"/>
    <lineage>
        <taxon>Eukaryota</taxon>
        <taxon>Viridiplantae</taxon>
        <taxon>Streptophyta</taxon>
        <taxon>Embryophyta</taxon>
        <taxon>Tracheophyta</taxon>
        <taxon>Spermatophyta</taxon>
        <taxon>Magnoliopsida</taxon>
        <taxon>eudicotyledons</taxon>
        <taxon>Gunneridae</taxon>
        <taxon>Pentapetalae</taxon>
        <taxon>rosids</taxon>
        <taxon>malvids</taxon>
        <taxon>Brassicales</taxon>
        <taxon>Brassicaceae</taxon>
        <taxon>Camelineae</taxon>
        <taxon>Arabidopsis</taxon>
    </lineage>
</organism>
<evidence type="ECO:0000303" key="1">
    <source>
    </source>
</evidence>
<evidence type="ECO:0000305" key="2"/>
<dbReference type="EMBL" id="AB026654">
    <property type="protein sequence ID" value="BAB01800.1"/>
    <property type="molecule type" value="Genomic_DNA"/>
</dbReference>
<dbReference type="EMBL" id="CP002686">
    <property type="protein sequence ID" value="AEE76138.1"/>
    <property type="molecule type" value="Genomic_DNA"/>
</dbReference>
<dbReference type="EMBL" id="AF446880">
    <property type="protein sequence ID" value="AAL38613.1"/>
    <property type="molecule type" value="mRNA"/>
</dbReference>
<dbReference type="EMBL" id="AY052710">
    <property type="protein sequence ID" value="AAK96614.1"/>
    <property type="molecule type" value="mRNA"/>
</dbReference>
<dbReference type="EMBL" id="AY088285">
    <property type="protein sequence ID" value="AAM65824.1"/>
    <property type="molecule type" value="mRNA"/>
</dbReference>
<dbReference type="SMR" id="Q9LSA3"/>
<dbReference type="BioGRID" id="6738">
    <property type="interactions" value="83"/>
</dbReference>
<dbReference type="FunCoup" id="Q9LSA3">
    <property type="interactions" value="3591"/>
</dbReference>
<dbReference type="IntAct" id="Q9LSA3">
    <property type="interactions" value="1"/>
</dbReference>
<dbReference type="STRING" id="3702.Q9LSA3"/>
<dbReference type="PaxDb" id="3702-AT3G18740.1"/>
<dbReference type="ProteomicsDB" id="226027"/>
<dbReference type="EnsemblPlants" id="AT3G18740.1">
    <property type="protein sequence ID" value="AT3G18740.1"/>
    <property type="gene ID" value="AT3G18740"/>
</dbReference>
<dbReference type="Gramene" id="AT3G18740.1">
    <property type="protein sequence ID" value="AT3G18740.1"/>
    <property type="gene ID" value="AT3G18740"/>
</dbReference>
<dbReference type="KEGG" id="ath:AT3G18740"/>
<dbReference type="Araport" id="AT3G18740"/>
<dbReference type="TAIR" id="AT3G18740"/>
<dbReference type="eggNOG" id="KOG2988">
    <property type="taxonomic scope" value="Eukaryota"/>
</dbReference>
<dbReference type="HOGENOM" id="CLU_130502_0_1_1"/>
<dbReference type="InParanoid" id="Q9LSA3"/>
<dbReference type="OMA" id="ICNNCPA"/>
<dbReference type="OrthoDB" id="1033988at2759"/>
<dbReference type="PhylomeDB" id="Q9LSA3"/>
<dbReference type="CD-CODE" id="4299E36E">
    <property type="entry name" value="Nucleolus"/>
</dbReference>
<dbReference type="PRO" id="PR:Q9LSA3"/>
<dbReference type="Proteomes" id="UP000006548">
    <property type="component" value="Chromosome 3"/>
</dbReference>
<dbReference type="ExpressionAtlas" id="Q9LSA3">
    <property type="expression patterns" value="baseline and differential"/>
</dbReference>
<dbReference type="GO" id="GO:0005829">
    <property type="term" value="C:cytosol"/>
    <property type="evidence" value="ECO:0007005"/>
    <property type="project" value="TAIR"/>
</dbReference>
<dbReference type="GO" id="GO:0022625">
    <property type="term" value="C:cytosolic large ribosomal subunit"/>
    <property type="evidence" value="ECO:0007005"/>
    <property type="project" value="TAIR"/>
</dbReference>
<dbReference type="GO" id="GO:0022626">
    <property type="term" value="C:cytosolic ribosome"/>
    <property type="evidence" value="ECO:0007005"/>
    <property type="project" value="TAIR"/>
</dbReference>
<dbReference type="GO" id="GO:0005886">
    <property type="term" value="C:plasma membrane"/>
    <property type="evidence" value="ECO:0000314"/>
    <property type="project" value="TAIR"/>
</dbReference>
<dbReference type="GO" id="GO:0009506">
    <property type="term" value="C:plasmodesma"/>
    <property type="evidence" value="ECO:0007005"/>
    <property type="project" value="TAIR"/>
</dbReference>
<dbReference type="GO" id="GO:0003729">
    <property type="term" value="F:mRNA binding"/>
    <property type="evidence" value="ECO:0000314"/>
    <property type="project" value="TAIR"/>
</dbReference>
<dbReference type="GO" id="GO:0003735">
    <property type="term" value="F:structural constituent of ribosome"/>
    <property type="evidence" value="ECO:0000314"/>
    <property type="project" value="CAFA"/>
</dbReference>
<dbReference type="GO" id="GO:0009620">
    <property type="term" value="P:response to fungus"/>
    <property type="evidence" value="ECO:0000315"/>
    <property type="project" value="TAIR"/>
</dbReference>
<dbReference type="FunFam" id="3.30.1330.30:FF:000001">
    <property type="entry name" value="60S ribosomal protein L30"/>
    <property type="match status" value="1"/>
</dbReference>
<dbReference type="Gene3D" id="3.30.1330.30">
    <property type="match status" value="1"/>
</dbReference>
<dbReference type="HAMAP" id="MF_00481">
    <property type="entry name" value="Ribosomal_eL30"/>
    <property type="match status" value="1"/>
</dbReference>
<dbReference type="InterPro" id="IPR000231">
    <property type="entry name" value="Ribosomal_eL30"/>
</dbReference>
<dbReference type="InterPro" id="IPR039109">
    <property type="entry name" value="Ribosomal_eL30-like"/>
</dbReference>
<dbReference type="InterPro" id="IPR029064">
    <property type="entry name" value="Ribosomal_eL30-like_sf"/>
</dbReference>
<dbReference type="InterPro" id="IPR022991">
    <property type="entry name" value="Ribosomal_eL30_CS"/>
</dbReference>
<dbReference type="InterPro" id="IPR004038">
    <property type="entry name" value="Ribosomal_eL8/eL30/eS12/Gad45"/>
</dbReference>
<dbReference type="NCBIfam" id="NF002172">
    <property type="entry name" value="PRK01018.1"/>
    <property type="match status" value="1"/>
</dbReference>
<dbReference type="PANTHER" id="PTHR11449">
    <property type="entry name" value="RIBOSOMAL PROTEIN L30"/>
    <property type="match status" value="1"/>
</dbReference>
<dbReference type="Pfam" id="PF01248">
    <property type="entry name" value="Ribosomal_L7Ae"/>
    <property type="match status" value="1"/>
</dbReference>
<dbReference type="SUPFAM" id="SSF55315">
    <property type="entry name" value="L30e-like"/>
    <property type="match status" value="1"/>
</dbReference>
<dbReference type="PROSITE" id="PS00709">
    <property type="entry name" value="RIBOSOMAL_L30E_1"/>
    <property type="match status" value="1"/>
</dbReference>
<dbReference type="PROSITE" id="PS00993">
    <property type="entry name" value="RIBOSOMAL_L30E_2"/>
    <property type="match status" value="1"/>
</dbReference>